<gene>
    <name type="primary">pgk</name>
    <name type="ordered locus">Ta1075</name>
</gene>
<comment type="catalytic activity">
    <reaction>
        <text>(2R)-3-phosphoglycerate + ATP = (2R)-3-phospho-glyceroyl phosphate + ADP</text>
        <dbReference type="Rhea" id="RHEA:14801"/>
        <dbReference type="ChEBI" id="CHEBI:30616"/>
        <dbReference type="ChEBI" id="CHEBI:57604"/>
        <dbReference type="ChEBI" id="CHEBI:58272"/>
        <dbReference type="ChEBI" id="CHEBI:456216"/>
        <dbReference type="EC" id="2.7.2.3"/>
    </reaction>
</comment>
<comment type="pathway">
    <text>Carbohydrate degradation; glycolysis; pyruvate from D-glyceraldehyde 3-phosphate: step 2/5.</text>
</comment>
<comment type="subunit">
    <text evidence="1">Monomer.</text>
</comment>
<comment type="subcellular location">
    <subcellularLocation>
        <location evidence="2">Cytoplasm</location>
    </subcellularLocation>
</comment>
<comment type="similarity">
    <text evidence="2">Belongs to the phosphoglycerate kinase family.</text>
</comment>
<reference key="1">
    <citation type="journal article" date="2000" name="Nature">
        <title>The genome sequence of the thermoacidophilic scavenger Thermoplasma acidophilum.</title>
        <authorList>
            <person name="Ruepp A."/>
            <person name="Graml W."/>
            <person name="Santos-Martinez M.-L."/>
            <person name="Koretke K.K."/>
            <person name="Volker C."/>
            <person name="Mewes H.-W."/>
            <person name="Frishman D."/>
            <person name="Stocker S."/>
            <person name="Lupas A.N."/>
            <person name="Baumeister W."/>
        </authorList>
    </citation>
    <scope>NUCLEOTIDE SEQUENCE [LARGE SCALE GENOMIC DNA]</scope>
    <source>
        <strain>ATCC 25905 / DSM 1728 / JCM 9062 / NBRC 15155 / AMRC-C165</strain>
    </source>
</reference>
<evidence type="ECO:0000250" key="1"/>
<evidence type="ECO:0000305" key="2"/>
<proteinExistence type="inferred from homology"/>
<protein>
    <recommendedName>
        <fullName>Phosphoglycerate kinase</fullName>
        <ecNumber>2.7.2.3</ecNumber>
    </recommendedName>
</protein>
<organism>
    <name type="scientific">Thermoplasma acidophilum (strain ATCC 25905 / DSM 1728 / JCM 9062 / NBRC 15155 / AMRC-C165)</name>
    <dbReference type="NCBI Taxonomy" id="273075"/>
    <lineage>
        <taxon>Archaea</taxon>
        <taxon>Methanobacteriati</taxon>
        <taxon>Thermoplasmatota</taxon>
        <taxon>Thermoplasmata</taxon>
        <taxon>Thermoplasmatales</taxon>
        <taxon>Thermoplasmataceae</taxon>
        <taxon>Thermoplasma</taxon>
    </lineage>
</organism>
<keyword id="KW-0067">ATP-binding</keyword>
<keyword id="KW-0963">Cytoplasm</keyword>
<keyword id="KW-0324">Glycolysis</keyword>
<keyword id="KW-0418">Kinase</keyword>
<keyword id="KW-0547">Nucleotide-binding</keyword>
<keyword id="KW-1185">Reference proteome</keyword>
<keyword id="KW-0808">Transferase</keyword>
<accession>Q9HJ95</accession>
<sequence>MDEFFLMNSFDLAGKTVYLRVDINAPVNPLTGEIMGIDRFRAHIDTIRNLRNSKVVIVAHQSRPGKDDFISLRQHAQILSHLLNKRVQFVDQLFGSQVNRAVSEMSDGDIVMLENSRFYSEEVDLTTIESMESSNIVRSLSPLFDYFIIDAFAAIHRAQTTLVGFHRIKPNIAGTLIEREVSMIERFRKIREKPKIAILGGAKIEDSIAVSENFLSRGFVDKILTGGVVANAFLWASGFDIGKKNREFIMKNNGDYEKLLDKCRAILSKYGDKLVMPTDFVMNPSGQRISINEKIPDDQILADIGLDTIVEYSEIIDGARAIFMNGPMGMYEIEDYSSGTREVFTAVAHSKAFKLAGGGHTLSALDKLGLTKMIDHASTGGGALISYLSGETMPVLEALKESKKLFEG</sequence>
<feature type="chain" id="PRO_0000146073" description="Phosphoglycerate kinase">
    <location>
        <begin position="1"/>
        <end position="408"/>
    </location>
</feature>
<feature type="binding site" evidence="1">
    <location>
        <begin position="22"/>
        <end position="24"/>
    </location>
    <ligand>
        <name>substrate</name>
    </ligand>
</feature>
<feature type="binding site" evidence="1">
    <location>
        <position position="39"/>
    </location>
    <ligand>
        <name>substrate</name>
    </ligand>
</feature>
<feature type="binding site" evidence="1">
    <location>
        <begin position="60"/>
        <end position="63"/>
    </location>
    <ligand>
        <name>substrate</name>
    </ligand>
</feature>
<feature type="binding site" evidence="1">
    <location>
        <position position="117"/>
    </location>
    <ligand>
        <name>substrate</name>
    </ligand>
</feature>
<feature type="binding site" evidence="1">
    <location>
        <position position="157"/>
    </location>
    <ligand>
        <name>substrate</name>
    </ligand>
</feature>
<feature type="binding site" evidence="1">
    <location>
        <position position="332"/>
    </location>
    <ligand>
        <name>ATP</name>
        <dbReference type="ChEBI" id="CHEBI:30616"/>
    </ligand>
</feature>
<feature type="binding site" evidence="1">
    <location>
        <begin position="358"/>
        <end position="361"/>
    </location>
    <ligand>
        <name>ATP</name>
        <dbReference type="ChEBI" id="CHEBI:30616"/>
    </ligand>
</feature>
<dbReference type="EC" id="2.7.2.3"/>
<dbReference type="EMBL" id="AL445066">
    <property type="protein sequence ID" value="CAC12203.1"/>
    <property type="molecule type" value="Genomic_DNA"/>
</dbReference>
<dbReference type="RefSeq" id="WP_010901486.1">
    <property type="nucleotide sequence ID" value="NC_002578.1"/>
</dbReference>
<dbReference type="SMR" id="Q9HJ95"/>
<dbReference type="FunCoup" id="Q9HJ95">
    <property type="interactions" value="169"/>
</dbReference>
<dbReference type="STRING" id="273075.gene:9572296"/>
<dbReference type="PaxDb" id="273075-Ta1075"/>
<dbReference type="EnsemblBacteria" id="CAC12203">
    <property type="protein sequence ID" value="CAC12203"/>
    <property type="gene ID" value="CAC12203"/>
</dbReference>
<dbReference type="KEGG" id="tac:Ta1075"/>
<dbReference type="eggNOG" id="arCOG00496">
    <property type="taxonomic scope" value="Archaea"/>
</dbReference>
<dbReference type="HOGENOM" id="CLU_025427_0_2_2"/>
<dbReference type="InParanoid" id="Q9HJ95"/>
<dbReference type="OrthoDB" id="6575at2157"/>
<dbReference type="UniPathway" id="UPA00109">
    <property type="reaction ID" value="UER00185"/>
</dbReference>
<dbReference type="Proteomes" id="UP000001024">
    <property type="component" value="Chromosome"/>
</dbReference>
<dbReference type="GO" id="GO:0005829">
    <property type="term" value="C:cytosol"/>
    <property type="evidence" value="ECO:0007669"/>
    <property type="project" value="TreeGrafter"/>
</dbReference>
<dbReference type="GO" id="GO:0043531">
    <property type="term" value="F:ADP binding"/>
    <property type="evidence" value="ECO:0007669"/>
    <property type="project" value="TreeGrafter"/>
</dbReference>
<dbReference type="GO" id="GO:0005524">
    <property type="term" value="F:ATP binding"/>
    <property type="evidence" value="ECO:0007669"/>
    <property type="project" value="UniProtKB-KW"/>
</dbReference>
<dbReference type="GO" id="GO:0004618">
    <property type="term" value="F:phosphoglycerate kinase activity"/>
    <property type="evidence" value="ECO:0007669"/>
    <property type="project" value="UniProtKB-UniRule"/>
</dbReference>
<dbReference type="GO" id="GO:0006094">
    <property type="term" value="P:gluconeogenesis"/>
    <property type="evidence" value="ECO:0007669"/>
    <property type="project" value="TreeGrafter"/>
</dbReference>
<dbReference type="GO" id="GO:0006096">
    <property type="term" value="P:glycolytic process"/>
    <property type="evidence" value="ECO:0007669"/>
    <property type="project" value="UniProtKB-UniRule"/>
</dbReference>
<dbReference type="FunFam" id="3.40.50.1260:FF:000006">
    <property type="entry name" value="Phosphoglycerate kinase"/>
    <property type="match status" value="1"/>
</dbReference>
<dbReference type="FunFam" id="3.40.50.1260:FF:000012">
    <property type="entry name" value="Phosphoglycerate kinase"/>
    <property type="match status" value="1"/>
</dbReference>
<dbReference type="Gene3D" id="3.40.50.1260">
    <property type="entry name" value="Phosphoglycerate kinase, N-terminal domain"/>
    <property type="match status" value="2"/>
</dbReference>
<dbReference type="HAMAP" id="MF_00145">
    <property type="entry name" value="Phosphoglyc_kinase"/>
    <property type="match status" value="1"/>
</dbReference>
<dbReference type="InterPro" id="IPR001576">
    <property type="entry name" value="Phosphoglycerate_kinase"/>
</dbReference>
<dbReference type="InterPro" id="IPR015824">
    <property type="entry name" value="Phosphoglycerate_kinase_N"/>
</dbReference>
<dbReference type="InterPro" id="IPR036043">
    <property type="entry name" value="Phosphoglycerate_kinase_sf"/>
</dbReference>
<dbReference type="PANTHER" id="PTHR11406">
    <property type="entry name" value="PHOSPHOGLYCERATE KINASE"/>
    <property type="match status" value="1"/>
</dbReference>
<dbReference type="PANTHER" id="PTHR11406:SF23">
    <property type="entry name" value="PHOSPHOGLYCERATE KINASE 1, CHLOROPLASTIC-RELATED"/>
    <property type="match status" value="1"/>
</dbReference>
<dbReference type="Pfam" id="PF00162">
    <property type="entry name" value="PGK"/>
    <property type="match status" value="1"/>
</dbReference>
<dbReference type="PIRSF" id="PIRSF000724">
    <property type="entry name" value="Pgk"/>
    <property type="match status" value="1"/>
</dbReference>
<dbReference type="PRINTS" id="PR00477">
    <property type="entry name" value="PHGLYCKINASE"/>
</dbReference>
<dbReference type="SUPFAM" id="SSF53748">
    <property type="entry name" value="Phosphoglycerate kinase"/>
    <property type="match status" value="1"/>
</dbReference>
<name>PGK_THEAC</name>